<gene>
    <name evidence="1" type="primary">proS</name>
    <name type="ordered locus">ECED1_0201</name>
</gene>
<reference key="1">
    <citation type="journal article" date="2009" name="PLoS Genet.">
        <title>Organised genome dynamics in the Escherichia coli species results in highly diverse adaptive paths.</title>
        <authorList>
            <person name="Touchon M."/>
            <person name="Hoede C."/>
            <person name="Tenaillon O."/>
            <person name="Barbe V."/>
            <person name="Baeriswyl S."/>
            <person name="Bidet P."/>
            <person name="Bingen E."/>
            <person name="Bonacorsi S."/>
            <person name="Bouchier C."/>
            <person name="Bouvet O."/>
            <person name="Calteau A."/>
            <person name="Chiapello H."/>
            <person name="Clermont O."/>
            <person name="Cruveiller S."/>
            <person name="Danchin A."/>
            <person name="Diard M."/>
            <person name="Dossat C."/>
            <person name="Karoui M.E."/>
            <person name="Frapy E."/>
            <person name="Garry L."/>
            <person name="Ghigo J.M."/>
            <person name="Gilles A.M."/>
            <person name="Johnson J."/>
            <person name="Le Bouguenec C."/>
            <person name="Lescat M."/>
            <person name="Mangenot S."/>
            <person name="Martinez-Jehanne V."/>
            <person name="Matic I."/>
            <person name="Nassif X."/>
            <person name="Oztas S."/>
            <person name="Petit M.A."/>
            <person name="Pichon C."/>
            <person name="Rouy Z."/>
            <person name="Ruf C.S."/>
            <person name="Schneider D."/>
            <person name="Tourret J."/>
            <person name="Vacherie B."/>
            <person name="Vallenet D."/>
            <person name="Medigue C."/>
            <person name="Rocha E.P.C."/>
            <person name="Denamur E."/>
        </authorList>
    </citation>
    <scope>NUCLEOTIDE SEQUENCE [LARGE SCALE GENOMIC DNA]</scope>
    <source>
        <strain>ED1a</strain>
    </source>
</reference>
<evidence type="ECO:0000255" key="1">
    <source>
        <dbReference type="HAMAP-Rule" id="MF_01569"/>
    </source>
</evidence>
<accession>B7MP55</accession>
<organism>
    <name type="scientific">Escherichia coli O81 (strain ED1a)</name>
    <dbReference type="NCBI Taxonomy" id="585397"/>
    <lineage>
        <taxon>Bacteria</taxon>
        <taxon>Pseudomonadati</taxon>
        <taxon>Pseudomonadota</taxon>
        <taxon>Gammaproteobacteria</taxon>
        <taxon>Enterobacterales</taxon>
        <taxon>Enterobacteriaceae</taxon>
        <taxon>Escherichia</taxon>
    </lineage>
</organism>
<proteinExistence type="inferred from homology"/>
<sequence>MRTSQYLLSTLKETPADAEVISHQLMLRAGMIRKLASGLYTWLPTGVRVLKKVENIVREEMNNAGAIEVLMPVVQPSELWQESGRWEQYGPELLRIADRGDRPFVLGPTHEEVITDLIRNELSSYKQLPLNFYQIQTKFRDEVRPRFGVMRSREFLMKDAYSFHTSQESLQETYDAMYAAYSKIFSRMGLDFRAVQADTGSIGGSASHEFQVLAQSGEDDVVFSDTSDYAANIELAEAIAPKEPRAAATQEMTLVDTPNAKTIAELVEQFNLPIEKTVKTLLVKAVEGSSFPLVALLVRGDHELNEVKAEKLPQVASPLTFATEEEIRAVVKAGPGSLGPVNMPIPVVIDRTVAAMSDFAAGANIDGKHYFGINWDRDVATPEIADIRNVVAGDPSPDGQGTLLIKRGIEVGHIFQLGTKYSEALKASVQGEDGRNQILTMGCYGIGVTRVVAAAIEQNYDERGIVWPDAIAPFQVAILPMNMHKSFRVQELAEKLYSELRAQGIEVLLDDRKERPGVMFADMELIGIPHTIVLGDRNLDNDDIEYKYRRNGEKQLIKTGDIVDYLVKQIKG</sequence>
<protein>
    <recommendedName>
        <fullName evidence="1">Proline--tRNA ligase</fullName>
        <ecNumber evidence="1">6.1.1.15</ecNumber>
    </recommendedName>
    <alternativeName>
        <fullName evidence="1">Prolyl-tRNA synthetase</fullName>
        <shortName evidence="1">ProRS</shortName>
    </alternativeName>
</protein>
<comment type="function">
    <text evidence="1">Catalyzes the attachment of proline to tRNA(Pro) in a two-step reaction: proline is first activated by ATP to form Pro-AMP and then transferred to the acceptor end of tRNA(Pro). As ProRS can inadvertently accommodate and process non-cognate amino acids such as alanine and cysteine, to avoid such errors it has two additional distinct editing activities against alanine. One activity is designated as 'pretransfer' editing and involves the tRNA(Pro)-independent hydrolysis of activated Ala-AMP. The other activity is designated 'posttransfer' editing and involves deacylation of mischarged Ala-tRNA(Pro). The misacylated Cys-tRNA(Pro) is not edited by ProRS.</text>
</comment>
<comment type="catalytic activity">
    <reaction evidence="1">
        <text>tRNA(Pro) + L-proline + ATP = L-prolyl-tRNA(Pro) + AMP + diphosphate</text>
        <dbReference type="Rhea" id="RHEA:14305"/>
        <dbReference type="Rhea" id="RHEA-COMP:9700"/>
        <dbReference type="Rhea" id="RHEA-COMP:9702"/>
        <dbReference type="ChEBI" id="CHEBI:30616"/>
        <dbReference type="ChEBI" id="CHEBI:33019"/>
        <dbReference type="ChEBI" id="CHEBI:60039"/>
        <dbReference type="ChEBI" id="CHEBI:78442"/>
        <dbReference type="ChEBI" id="CHEBI:78532"/>
        <dbReference type="ChEBI" id="CHEBI:456215"/>
        <dbReference type="EC" id="6.1.1.15"/>
    </reaction>
</comment>
<comment type="subunit">
    <text evidence="1">Homodimer.</text>
</comment>
<comment type="subcellular location">
    <subcellularLocation>
        <location evidence="1">Cytoplasm</location>
    </subcellularLocation>
</comment>
<comment type="domain">
    <text evidence="1">Consists of three domains: the N-terminal catalytic domain, the editing domain and the C-terminal anticodon-binding domain.</text>
</comment>
<comment type="similarity">
    <text evidence="1">Belongs to the class-II aminoacyl-tRNA synthetase family. ProS type 1 subfamily.</text>
</comment>
<dbReference type="EC" id="6.1.1.15" evidence="1"/>
<dbReference type="EMBL" id="CU928162">
    <property type="protein sequence ID" value="CAR06420.1"/>
    <property type="molecule type" value="Genomic_DNA"/>
</dbReference>
<dbReference type="RefSeq" id="WP_001260694.1">
    <property type="nucleotide sequence ID" value="NC_011745.1"/>
</dbReference>
<dbReference type="SMR" id="B7MP55"/>
<dbReference type="KEGG" id="ecq:ECED1_0201"/>
<dbReference type="HOGENOM" id="CLU_016739_0_0_6"/>
<dbReference type="Proteomes" id="UP000000748">
    <property type="component" value="Chromosome"/>
</dbReference>
<dbReference type="GO" id="GO:0005829">
    <property type="term" value="C:cytosol"/>
    <property type="evidence" value="ECO:0007669"/>
    <property type="project" value="TreeGrafter"/>
</dbReference>
<dbReference type="GO" id="GO:0002161">
    <property type="term" value="F:aminoacyl-tRNA deacylase activity"/>
    <property type="evidence" value="ECO:0007669"/>
    <property type="project" value="InterPro"/>
</dbReference>
<dbReference type="GO" id="GO:0005524">
    <property type="term" value="F:ATP binding"/>
    <property type="evidence" value="ECO:0007669"/>
    <property type="project" value="UniProtKB-UniRule"/>
</dbReference>
<dbReference type="GO" id="GO:0004827">
    <property type="term" value="F:proline-tRNA ligase activity"/>
    <property type="evidence" value="ECO:0007669"/>
    <property type="project" value="UniProtKB-UniRule"/>
</dbReference>
<dbReference type="GO" id="GO:0006433">
    <property type="term" value="P:prolyl-tRNA aminoacylation"/>
    <property type="evidence" value="ECO:0007669"/>
    <property type="project" value="UniProtKB-UniRule"/>
</dbReference>
<dbReference type="CDD" id="cd04334">
    <property type="entry name" value="ProRS-INS"/>
    <property type="match status" value="1"/>
</dbReference>
<dbReference type="CDD" id="cd00861">
    <property type="entry name" value="ProRS_anticodon_short"/>
    <property type="match status" value="1"/>
</dbReference>
<dbReference type="CDD" id="cd00779">
    <property type="entry name" value="ProRS_core_prok"/>
    <property type="match status" value="1"/>
</dbReference>
<dbReference type="FunFam" id="3.30.930.10:FF:000043">
    <property type="entry name" value="Proline--tRNA ligase"/>
    <property type="match status" value="1"/>
</dbReference>
<dbReference type="FunFam" id="3.30.930.10:FF:000097">
    <property type="entry name" value="Proline--tRNA ligase"/>
    <property type="match status" value="1"/>
</dbReference>
<dbReference type="FunFam" id="3.40.50.800:FF:000006">
    <property type="entry name" value="Proline--tRNA ligase"/>
    <property type="match status" value="1"/>
</dbReference>
<dbReference type="FunFam" id="3.90.960.10:FF:000001">
    <property type="entry name" value="Proline--tRNA ligase"/>
    <property type="match status" value="1"/>
</dbReference>
<dbReference type="Gene3D" id="3.40.50.800">
    <property type="entry name" value="Anticodon-binding domain"/>
    <property type="match status" value="1"/>
</dbReference>
<dbReference type="Gene3D" id="3.30.930.10">
    <property type="entry name" value="Bira Bifunctional Protein, Domain 2"/>
    <property type="match status" value="2"/>
</dbReference>
<dbReference type="Gene3D" id="3.90.960.10">
    <property type="entry name" value="YbaK/aminoacyl-tRNA synthetase-associated domain"/>
    <property type="match status" value="1"/>
</dbReference>
<dbReference type="HAMAP" id="MF_01569">
    <property type="entry name" value="Pro_tRNA_synth_type1"/>
    <property type="match status" value="1"/>
</dbReference>
<dbReference type="InterPro" id="IPR002314">
    <property type="entry name" value="aa-tRNA-synt_IIb"/>
</dbReference>
<dbReference type="InterPro" id="IPR006195">
    <property type="entry name" value="aa-tRNA-synth_II"/>
</dbReference>
<dbReference type="InterPro" id="IPR045864">
    <property type="entry name" value="aa-tRNA-synth_II/BPL/LPL"/>
</dbReference>
<dbReference type="InterPro" id="IPR004154">
    <property type="entry name" value="Anticodon-bd"/>
</dbReference>
<dbReference type="InterPro" id="IPR036621">
    <property type="entry name" value="Anticodon-bd_dom_sf"/>
</dbReference>
<dbReference type="InterPro" id="IPR002316">
    <property type="entry name" value="Pro-tRNA-ligase_IIa"/>
</dbReference>
<dbReference type="InterPro" id="IPR004500">
    <property type="entry name" value="Pro-tRNA-synth_IIa_bac-type"/>
</dbReference>
<dbReference type="InterPro" id="IPR023717">
    <property type="entry name" value="Pro-tRNA-Synthase_IIa_type1"/>
</dbReference>
<dbReference type="InterPro" id="IPR050062">
    <property type="entry name" value="Pro-tRNA_synthetase"/>
</dbReference>
<dbReference type="InterPro" id="IPR044140">
    <property type="entry name" value="ProRS_anticodon_short"/>
</dbReference>
<dbReference type="InterPro" id="IPR033730">
    <property type="entry name" value="ProRS_core_prok"/>
</dbReference>
<dbReference type="InterPro" id="IPR036754">
    <property type="entry name" value="YbaK/aa-tRNA-synt-asso_dom_sf"/>
</dbReference>
<dbReference type="InterPro" id="IPR007214">
    <property type="entry name" value="YbaK/aa-tRNA-synth-assoc-dom"/>
</dbReference>
<dbReference type="NCBIfam" id="NF006625">
    <property type="entry name" value="PRK09194.1"/>
    <property type="match status" value="1"/>
</dbReference>
<dbReference type="NCBIfam" id="TIGR00409">
    <property type="entry name" value="proS_fam_II"/>
    <property type="match status" value="1"/>
</dbReference>
<dbReference type="PANTHER" id="PTHR42753">
    <property type="entry name" value="MITOCHONDRIAL RIBOSOME PROTEIN L39/PROLYL-TRNA LIGASE FAMILY MEMBER"/>
    <property type="match status" value="1"/>
</dbReference>
<dbReference type="PANTHER" id="PTHR42753:SF2">
    <property type="entry name" value="PROLINE--TRNA LIGASE"/>
    <property type="match status" value="1"/>
</dbReference>
<dbReference type="Pfam" id="PF03129">
    <property type="entry name" value="HGTP_anticodon"/>
    <property type="match status" value="1"/>
</dbReference>
<dbReference type="Pfam" id="PF00587">
    <property type="entry name" value="tRNA-synt_2b"/>
    <property type="match status" value="1"/>
</dbReference>
<dbReference type="Pfam" id="PF04073">
    <property type="entry name" value="tRNA_edit"/>
    <property type="match status" value="1"/>
</dbReference>
<dbReference type="PIRSF" id="PIRSF001535">
    <property type="entry name" value="ProRS_1"/>
    <property type="match status" value="1"/>
</dbReference>
<dbReference type="PRINTS" id="PR01046">
    <property type="entry name" value="TRNASYNTHPRO"/>
</dbReference>
<dbReference type="SUPFAM" id="SSF52954">
    <property type="entry name" value="Class II aaRS ABD-related"/>
    <property type="match status" value="1"/>
</dbReference>
<dbReference type="SUPFAM" id="SSF55681">
    <property type="entry name" value="Class II aaRS and biotin synthetases"/>
    <property type="match status" value="1"/>
</dbReference>
<dbReference type="SUPFAM" id="SSF55826">
    <property type="entry name" value="YbaK/ProRS associated domain"/>
    <property type="match status" value="1"/>
</dbReference>
<dbReference type="PROSITE" id="PS50862">
    <property type="entry name" value="AA_TRNA_LIGASE_II"/>
    <property type="match status" value="1"/>
</dbReference>
<name>SYP_ECO81</name>
<feature type="chain" id="PRO_1000185501" description="Proline--tRNA ligase">
    <location>
        <begin position="1"/>
        <end position="572"/>
    </location>
</feature>
<keyword id="KW-0030">Aminoacyl-tRNA synthetase</keyword>
<keyword id="KW-0067">ATP-binding</keyword>
<keyword id="KW-0963">Cytoplasm</keyword>
<keyword id="KW-0436">Ligase</keyword>
<keyword id="KW-0547">Nucleotide-binding</keyword>
<keyword id="KW-0648">Protein biosynthesis</keyword>